<accession>A9KIP3</accession>
<sequence length="160" mass="18158">MAEKKNILTYEGLKQLEDELQDLKVNKRKEVSQKIKEAREQGDLSENAEYDAAKDEQRDIEARIEEIDKILKNAEVVVEDEVDVDTVNIGCLVRILDMEFNDELEYKIVGSTEANSLKGKISNESPVGKALIGARKDDVIEIEINGNSFKYKVLEIQKSN</sequence>
<comment type="function">
    <text evidence="1">Necessary for efficient RNA polymerase transcription elongation past template-encoded arresting sites. The arresting sites in DNA have the property of trapping a certain fraction of elongating RNA polymerases that pass through, resulting in locked ternary complexes. Cleavage of the nascent transcript by cleavage factors such as GreA or GreB allows the resumption of elongation from the new 3'terminus. GreA releases sequences of 2 to 3 nucleotides.</text>
</comment>
<comment type="similarity">
    <text evidence="1">Belongs to the GreA/GreB family.</text>
</comment>
<protein>
    <recommendedName>
        <fullName evidence="1">Transcription elongation factor GreA</fullName>
    </recommendedName>
    <alternativeName>
        <fullName evidence="1">Transcript cleavage factor GreA</fullName>
    </alternativeName>
</protein>
<proteinExistence type="inferred from homology"/>
<name>GREA_LACP7</name>
<evidence type="ECO:0000255" key="1">
    <source>
        <dbReference type="HAMAP-Rule" id="MF_00105"/>
    </source>
</evidence>
<evidence type="ECO:0000256" key="2">
    <source>
        <dbReference type="SAM" id="MobiDB-lite"/>
    </source>
</evidence>
<feature type="chain" id="PRO_1000118958" description="Transcription elongation factor GreA">
    <location>
        <begin position="1"/>
        <end position="160"/>
    </location>
</feature>
<feature type="region of interest" description="Disordered" evidence="2">
    <location>
        <begin position="36"/>
        <end position="55"/>
    </location>
</feature>
<feature type="coiled-coil region" evidence="1">
    <location>
        <begin position="2"/>
        <end position="81"/>
    </location>
</feature>
<reference key="1">
    <citation type="submission" date="2007-11" db="EMBL/GenBank/DDBJ databases">
        <title>Complete genome sequence of Clostridium phytofermentans ISDg.</title>
        <authorList>
            <person name="Leschine S.B."/>
            <person name="Warnick T.A."/>
            <person name="Blanchard J.L."/>
            <person name="Schnell D.J."/>
            <person name="Petit E.L."/>
            <person name="LaTouf W.G."/>
            <person name="Copeland A."/>
            <person name="Lucas S."/>
            <person name="Lapidus A."/>
            <person name="Barry K."/>
            <person name="Glavina del Rio T."/>
            <person name="Dalin E."/>
            <person name="Tice H."/>
            <person name="Pitluck S."/>
            <person name="Kiss H."/>
            <person name="Brettin T."/>
            <person name="Bruce D."/>
            <person name="Detter J.C."/>
            <person name="Han C."/>
            <person name="Kuske C."/>
            <person name="Schmutz J."/>
            <person name="Larimer F."/>
            <person name="Land M."/>
            <person name="Hauser L."/>
            <person name="Kyrpides N."/>
            <person name="Kim E.A."/>
            <person name="Richardson P."/>
        </authorList>
    </citation>
    <scope>NUCLEOTIDE SEQUENCE [LARGE SCALE GENOMIC DNA]</scope>
    <source>
        <strain>ATCC 700394 / DSM 18823 / ISDg</strain>
    </source>
</reference>
<organism>
    <name type="scientific">Lachnoclostridium phytofermentans (strain ATCC 700394 / DSM 18823 / ISDg)</name>
    <name type="common">Clostridium phytofermentans</name>
    <dbReference type="NCBI Taxonomy" id="357809"/>
    <lineage>
        <taxon>Bacteria</taxon>
        <taxon>Bacillati</taxon>
        <taxon>Bacillota</taxon>
        <taxon>Clostridia</taxon>
        <taxon>Lachnospirales</taxon>
        <taxon>Lachnospiraceae</taxon>
    </lineage>
</organism>
<dbReference type="EMBL" id="CP000885">
    <property type="protein sequence ID" value="ABX43906.1"/>
    <property type="molecule type" value="Genomic_DNA"/>
</dbReference>
<dbReference type="RefSeq" id="WP_012201554.1">
    <property type="nucleotide sequence ID" value="NC_010001.1"/>
</dbReference>
<dbReference type="SMR" id="A9KIP3"/>
<dbReference type="STRING" id="357809.Cphy_3557"/>
<dbReference type="KEGG" id="cpy:Cphy_3557"/>
<dbReference type="eggNOG" id="COG0782">
    <property type="taxonomic scope" value="Bacteria"/>
</dbReference>
<dbReference type="HOGENOM" id="CLU_101379_2_1_9"/>
<dbReference type="OrthoDB" id="9808774at2"/>
<dbReference type="Proteomes" id="UP000000370">
    <property type="component" value="Chromosome"/>
</dbReference>
<dbReference type="GO" id="GO:0003677">
    <property type="term" value="F:DNA binding"/>
    <property type="evidence" value="ECO:0007669"/>
    <property type="project" value="UniProtKB-UniRule"/>
</dbReference>
<dbReference type="GO" id="GO:0070063">
    <property type="term" value="F:RNA polymerase binding"/>
    <property type="evidence" value="ECO:0007669"/>
    <property type="project" value="InterPro"/>
</dbReference>
<dbReference type="GO" id="GO:0006354">
    <property type="term" value="P:DNA-templated transcription elongation"/>
    <property type="evidence" value="ECO:0007669"/>
    <property type="project" value="TreeGrafter"/>
</dbReference>
<dbReference type="GO" id="GO:0032784">
    <property type="term" value="P:regulation of DNA-templated transcription elongation"/>
    <property type="evidence" value="ECO:0007669"/>
    <property type="project" value="UniProtKB-UniRule"/>
</dbReference>
<dbReference type="FunFam" id="1.10.287.180:FF:000001">
    <property type="entry name" value="Transcription elongation factor GreA"/>
    <property type="match status" value="1"/>
</dbReference>
<dbReference type="Gene3D" id="3.10.50.30">
    <property type="entry name" value="Transcription elongation factor, GreA/GreB, C-terminal domain"/>
    <property type="match status" value="1"/>
</dbReference>
<dbReference type="Gene3D" id="1.10.287.180">
    <property type="entry name" value="Transcription elongation factor, GreA/GreB, N-terminal domain"/>
    <property type="match status" value="1"/>
</dbReference>
<dbReference type="HAMAP" id="MF_00105">
    <property type="entry name" value="GreA_GreB"/>
    <property type="match status" value="1"/>
</dbReference>
<dbReference type="InterPro" id="IPR036953">
    <property type="entry name" value="GreA/GreB_C_sf"/>
</dbReference>
<dbReference type="InterPro" id="IPR018151">
    <property type="entry name" value="TF_GreA/GreB_CS"/>
</dbReference>
<dbReference type="InterPro" id="IPR006359">
    <property type="entry name" value="Tscrpt_elong_fac_GreA"/>
</dbReference>
<dbReference type="InterPro" id="IPR028624">
    <property type="entry name" value="Tscrpt_elong_fac_GreA/B"/>
</dbReference>
<dbReference type="InterPro" id="IPR001437">
    <property type="entry name" value="Tscrpt_elong_fac_GreA/B_C"/>
</dbReference>
<dbReference type="InterPro" id="IPR023459">
    <property type="entry name" value="Tscrpt_elong_fac_GreA/B_fam"/>
</dbReference>
<dbReference type="InterPro" id="IPR022691">
    <property type="entry name" value="Tscrpt_elong_fac_GreA/B_N"/>
</dbReference>
<dbReference type="InterPro" id="IPR036805">
    <property type="entry name" value="Tscrpt_elong_fac_GreA/B_N_sf"/>
</dbReference>
<dbReference type="NCBIfam" id="TIGR01462">
    <property type="entry name" value="greA"/>
    <property type="match status" value="1"/>
</dbReference>
<dbReference type="NCBIfam" id="NF001263">
    <property type="entry name" value="PRK00226.1-4"/>
    <property type="match status" value="1"/>
</dbReference>
<dbReference type="PANTHER" id="PTHR30437">
    <property type="entry name" value="TRANSCRIPTION ELONGATION FACTOR GREA"/>
    <property type="match status" value="1"/>
</dbReference>
<dbReference type="PANTHER" id="PTHR30437:SF4">
    <property type="entry name" value="TRANSCRIPTION ELONGATION FACTOR GREA"/>
    <property type="match status" value="1"/>
</dbReference>
<dbReference type="Pfam" id="PF01272">
    <property type="entry name" value="GreA_GreB"/>
    <property type="match status" value="1"/>
</dbReference>
<dbReference type="Pfam" id="PF03449">
    <property type="entry name" value="GreA_GreB_N"/>
    <property type="match status" value="1"/>
</dbReference>
<dbReference type="PIRSF" id="PIRSF006092">
    <property type="entry name" value="GreA_GreB"/>
    <property type="match status" value="1"/>
</dbReference>
<dbReference type="SUPFAM" id="SSF54534">
    <property type="entry name" value="FKBP-like"/>
    <property type="match status" value="1"/>
</dbReference>
<dbReference type="SUPFAM" id="SSF46557">
    <property type="entry name" value="GreA transcript cleavage protein, N-terminal domain"/>
    <property type="match status" value="1"/>
</dbReference>
<dbReference type="PROSITE" id="PS00829">
    <property type="entry name" value="GREAB_1"/>
    <property type="match status" value="1"/>
</dbReference>
<dbReference type="PROSITE" id="PS00830">
    <property type="entry name" value="GREAB_2"/>
    <property type="match status" value="1"/>
</dbReference>
<keyword id="KW-0175">Coiled coil</keyword>
<keyword id="KW-0238">DNA-binding</keyword>
<keyword id="KW-1185">Reference proteome</keyword>
<keyword id="KW-0804">Transcription</keyword>
<keyword id="KW-0805">Transcription regulation</keyword>
<gene>
    <name evidence="1" type="primary">greA</name>
    <name type="ordered locus">Cphy_3557</name>
</gene>